<evidence type="ECO:0000255" key="1">
    <source>
        <dbReference type="HAMAP-Rule" id="MF_00719"/>
    </source>
</evidence>
<dbReference type="EC" id="2.7.8.26" evidence="1"/>
<dbReference type="EMBL" id="CP000480">
    <property type="protein sequence ID" value="ABK70544.1"/>
    <property type="molecule type" value="Genomic_DNA"/>
</dbReference>
<dbReference type="EMBL" id="CP001663">
    <property type="protein sequence ID" value="AFP40632.1"/>
    <property type="molecule type" value="Genomic_DNA"/>
</dbReference>
<dbReference type="RefSeq" id="WP_011729695.1">
    <property type="nucleotide sequence ID" value="NZ_SIJM01000003.1"/>
</dbReference>
<dbReference type="RefSeq" id="YP_888553.1">
    <property type="nucleotide sequence ID" value="NC_008596.1"/>
</dbReference>
<dbReference type="STRING" id="246196.MSMEG_4277"/>
<dbReference type="PaxDb" id="246196-MSMEI_4175"/>
<dbReference type="KEGG" id="msb:LJ00_21195"/>
<dbReference type="KEGG" id="msg:MSMEI_4175"/>
<dbReference type="KEGG" id="msm:MSMEG_4277"/>
<dbReference type="PATRIC" id="fig|246196.19.peg.4196"/>
<dbReference type="eggNOG" id="COG0368">
    <property type="taxonomic scope" value="Bacteria"/>
</dbReference>
<dbReference type="OrthoDB" id="9794223at2"/>
<dbReference type="UniPathway" id="UPA00148">
    <property type="reaction ID" value="UER00238"/>
</dbReference>
<dbReference type="Proteomes" id="UP000000757">
    <property type="component" value="Chromosome"/>
</dbReference>
<dbReference type="Proteomes" id="UP000006158">
    <property type="component" value="Chromosome"/>
</dbReference>
<dbReference type="GO" id="GO:0005886">
    <property type="term" value="C:plasma membrane"/>
    <property type="evidence" value="ECO:0007669"/>
    <property type="project" value="UniProtKB-SubCell"/>
</dbReference>
<dbReference type="GO" id="GO:0051073">
    <property type="term" value="F:adenosylcobinamide-GDP ribazoletransferase activity"/>
    <property type="evidence" value="ECO:0007669"/>
    <property type="project" value="UniProtKB-UniRule"/>
</dbReference>
<dbReference type="GO" id="GO:0008818">
    <property type="term" value="F:cobalamin 5'-phosphate synthase activity"/>
    <property type="evidence" value="ECO:0007669"/>
    <property type="project" value="UniProtKB-UniRule"/>
</dbReference>
<dbReference type="GO" id="GO:0009236">
    <property type="term" value="P:cobalamin biosynthetic process"/>
    <property type="evidence" value="ECO:0007669"/>
    <property type="project" value="UniProtKB-UniRule"/>
</dbReference>
<dbReference type="HAMAP" id="MF_00719">
    <property type="entry name" value="CobS"/>
    <property type="match status" value="1"/>
</dbReference>
<dbReference type="InterPro" id="IPR003805">
    <property type="entry name" value="CobS"/>
</dbReference>
<dbReference type="NCBIfam" id="NF001279">
    <property type="entry name" value="PRK00235.2-1"/>
    <property type="match status" value="1"/>
</dbReference>
<dbReference type="PANTHER" id="PTHR34148">
    <property type="entry name" value="ADENOSYLCOBINAMIDE-GDP RIBAZOLETRANSFERASE"/>
    <property type="match status" value="1"/>
</dbReference>
<dbReference type="PANTHER" id="PTHR34148:SF1">
    <property type="entry name" value="ADENOSYLCOBINAMIDE-GDP RIBAZOLETRANSFERASE"/>
    <property type="match status" value="1"/>
</dbReference>
<dbReference type="Pfam" id="PF02654">
    <property type="entry name" value="CobS"/>
    <property type="match status" value="1"/>
</dbReference>
<sequence>MIRSLAGAFAFGTVLPVRASAGVGRGALTALPFVGLALGALAAAVVWAGGWAFAAGSPLPGVLAVAVLLLATRGLHIDGFCDTVDGLGCYGPPERALAVMRDGSAGPFGVAAVVVVIAVQALTFAELSVLAVVTAVVAGRVAVVAACRRSVPAAAGSTLGAAVAGSQPRWVVAGWIVALAALAVFACPRPWQGPLAVLVAIGCSLALVAHCVRRFGGITGDVLGAAVEVTTTLAALGLAIG</sequence>
<name>COBS_MYCS2</name>
<protein>
    <recommendedName>
        <fullName evidence="1">Adenosylcobinamide-GDP ribazoletransferase</fullName>
        <ecNumber evidence="1">2.7.8.26</ecNumber>
    </recommendedName>
    <alternativeName>
        <fullName evidence="1">Cobalamin synthase</fullName>
    </alternativeName>
    <alternativeName>
        <fullName evidence="1">Cobalamin-5'-phosphate synthase</fullName>
    </alternativeName>
</protein>
<organism>
    <name type="scientific">Mycolicibacterium smegmatis (strain ATCC 700084 / mc(2)155)</name>
    <name type="common">Mycobacterium smegmatis</name>
    <dbReference type="NCBI Taxonomy" id="246196"/>
    <lineage>
        <taxon>Bacteria</taxon>
        <taxon>Bacillati</taxon>
        <taxon>Actinomycetota</taxon>
        <taxon>Actinomycetes</taxon>
        <taxon>Mycobacteriales</taxon>
        <taxon>Mycobacteriaceae</taxon>
        <taxon>Mycolicibacterium</taxon>
    </lineage>
</organism>
<feature type="chain" id="PRO_1000045779" description="Adenosylcobinamide-GDP ribazoletransferase">
    <location>
        <begin position="1"/>
        <end position="241"/>
    </location>
</feature>
<feature type="transmembrane region" description="Helical" evidence="1">
    <location>
        <begin position="33"/>
        <end position="53"/>
    </location>
</feature>
<feature type="transmembrane region" description="Helical" evidence="1">
    <location>
        <begin position="55"/>
        <end position="75"/>
    </location>
</feature>
<feature type="transmembrane region" description="Helical" evidence="1">
    <location>
        <begin position="105"/>
        <end position="125"/>
    </location>
</feature>
<feature type="transmembrane region" description="Helical" evidence="1">
    <location>
        <begin position="127"/>
        <end position="147"/>
    </location>
</feature>
<feature type="transmembrane region" description="Helical" evidence="1">
    <location>
        <begin position="168"/>
        <end position="188"/>
    </location>
</feature>
<feature type="transmembrane region" description="Helical" evidence="1">
    <location>
        <begin position="192"/>
        <end position="212"/>
    </location>
</feature>
<feature type="transmembrane region" description="Helical" evidence="1">
    <location>
        <begin position="220"/>
        <end position="240"/>
    </location>
</feature>
<reference key="1">
    <citation type="submission" date="2006-10" db="EMBL/GenBank/DDBJ databases">
        <authorList>
            <person name="Fleischmann R.D."/>
            <person name="Dodson R.J."/>
            <person name="Haft D.H."/>
            <person name="Merkel J.S."/>
            <person name="Nelson W.C."/>
            <person name="Fraser C.M."/>
        </authorList>
    </citation>
    <scope>NUCLEOTIDE SEQUENCE [LARGE SCALE GENOMIC DNA]</scope>
    <source>
        <strain>ATCC 700084 / mc(2)155</strain>
    </source>
</reference>
<reference key="2">
    <citation type="journal article" date="2007" name="Genome Biol.">
        <title>Interrupted coding sequences in Mycobacterium smegmatis: authentic mutations or sequencing errors?</title>
        <authorList>
            <person name="Deshayes C."/>
            <person name="Perrodou E."/>
            <person name="Gallien S."/>
            <person name="Euphrasie D."/>
            <person name="Schaeffer C."/>
            <person name="Van-Dorsselaer A."/>
            <person name="Poch O."/>
            <person name="Lecompte O."/>
            <person name="Reyrat J.-M."/>
        </authorList>
    </citation>
    <scope>NUCLEOTIDE SEQUENCE [LARGE SCALE GENOMIC DNA]</scope>
    <source>
        <strain>ATCC 700084 / mc(2)155</strain>
    </source>
</reference>
<reference key="3">
    <citation type="journal article" date="2009" name="Genome Res.">
        <title>Ortho-proteogenomics: multiple proteomes investigation through orthology and a new MS-based protocol.</title>
        <authorList>
            <person name="Gallien S."/>
            <person name="Perrodou E."/>
            <person name="Carapito C."/>
            <person name="Deshayes C."/>
            <person name="Reyrat J.-M."/>
            <person name="Van Dorsselaer A."/>
            <person name="Poch O."/>
            <person name="Schaeffer C."/>
            <person name="Lecompte O."/>
        </authorList>
    </citation>
    <scope>NUCLEOTIDE SEQUENCE [LARGE SCALE GENOMIC DNA]</scope>
    <source>
        <strain>ATCC 700084 / mc(2)155</strain>
    </source>
</reference>
<proteinExistence type="inferred from homology"/>
<gene>
    <name evidence="1" type="primary">cobS</name>
    <name type="ordered locus">MSMEG_4277</name>
    <name type="ordered locus">MSMEI_4175</name>
</gene>
<comment type="function">
    <text evidence="1">Joins adenosylcobinamide-GDP and alpha-ribazole to generate adenosylcobalamin (Ado-cobalamin). Also synthesizes adenosylcobalamin 5'-phosphate from adenosylcobinamide-GDP and alpha-ribazole 5'-phosphate.</text>
</comment>
<comment type="catalytic activity">
    <reaction evidence="1">
        <text>alpha-ribazole + adenosylcob(III)inamide-GDP = adenosylcob(III)alamin + GMP + H(+)</text>
        <dbReference type="Rhea" id="RHEA:16049"/>
        <dbReference type="ChEBI" id="CHEBI:10329"/>
        <dbReference type="ChEBI" id="CHEBI:15378"/>
        <dbReference type="ChEBI" id="CHEBI:18408"/>
        <dbReference type="ChEBI" id="CHEBI:58115"/>
        <dbReference type="ChEBI" id="CHEBI:60487"/>
        <dbReference type="EC" id="2.7.8.26"/>
    </reaction>
</comment>
<comment type="catalytic activity">
    <reaction evidence="1">
        <text>alpha-ribazole 5'-phosphate + adenosylcob(III)inamide-GDP = adenosylcob(III)alamin 5'-phosphate + GMP + H(+)</text>
        <dbReference type="Rhea" id="RHEA:23560"/>
        <dbReference type="ChEBI" id="CHEBI:15378"/>
        <dbReference type="ChEBI" id="CHEBI:57918"/>
        <dbReference type="ChEBI" id="CHEBI:58115"/>
        <dbReference type="ChEBI" id="CHEBI:60487"/>
        <dbReference type="ChEBI" id="CHEBI:60493"/>
        <dbReference type="EC" id="2.7.8.26"/>
    </reaction>
</comment>
<comment type="cofactor">
    <cofactor evidence="1">
        <name>Mg(2+)</name>
        <dbReference type="ChEBI" id="CHEBI:18420"/>
    </cofactor>
</comment>
<comment type="pathway">
    <text evidence="1">Cofactor biosynthesis; adenosylcobalamin biosynthesis; adenosylcobalamin from cob(II)yrinate a,c-diamide: step 7/7.</text>
</comment>
<comment type="subcellular location">
    <subcellularLocation>
        <location evidence="1">Cell membrane</location>
        <topology evidence="1">Multi-pass membrane protein</topology>
    </subcellularLocation>
</comment>
<comment type="similarity">
    <text evidence="1">Belongs to the CobS family.</text>
</comment>
<accession>A0R065</accession>
<accession>I7G4S3</accession>
<keyword id="KW-1003">Cell membrane</keyword>
<keyword id="KW-0169">Cobalamin biosynthesis</keyword>
<keyword id="KW-0460">Magnesium</keyword>
<keyword id="KW-0472">Membrane</keyword>
<keyword id="KW-1185">Reference proteome</keyword>
<keyword id="KW-0808">Transferase</keyword>
<keyword id="KW-0812">Transmembrane</keyword>
<keyword id="KW-1133">Transmembrane helix</keyword>